<accession>P18428</accession>
<accession>B2R938</accession>
<accession>O43438</accession>
<accession>Q92672</accession>
<accession>Q9H403</accession>
<accession>Q9UD66</accession>
<evidence type="ECO:0000250" key="1">
    <source>
        <dbReference type="UniProtKB" id="P17213"/>
    </source>
</evidence>
<evidence type="ECO:0000250" key="2">
    <source>
        <dbReference type="UniProtKB" id="Q61805"/>
    </source>
</evidence>
<evidence type="ECO:0000255" key="3"/>
<evidence type="ECO:0000269" key="4">
    <source>
    </source>
</evidence>
<evidence type="ECO:0000269" key="5">
    <source>
    </source>
</evidence>
<evidence type="ECO:0000269" key="6">
    <source>
    </source>
</evidence>
<evidence type="ECO:0000269" key="7">
    <source>
    </source>
</evidence>
<evidence type="ECO:0000269" key="8">
    <source>
    </source>
</evidence>
<evidence type="ECO:0000269" key="9">
    <source>
    </source>
</evidence>
<evidence type="ECO:0000269" key="10">
    <source>
    </source>
</evidence>
<evidence type="ECO:0000269" key="11">
    <source ref="5"/>
</evidence>
<evidence type="ECO:0000305" key="12"/>
<evidence type="ECO:0000305" key="13">
    <source>
    </source>
</evidence>
<comment type="function">
    <text evidence="4 6 8 9 13">Plays a role in the innate immune response. Binds to the lipid A moiety of bacterial lipopolysaccharides (LPS), a glycolipid present in the outer membrane of all Gram-negative bacteria (PubMed:24120359, PubMed:7517398). Acts as an affinity enhancer for CD14, facilitating its association with LPS. Promotes the release of cytokines in response to bacterial lipopolysaccharide (PubMed:24120359, PubMed:7517398).</text>
</comment>
<comment type="subunit">
    <text evidence="4 13">When bound to LPS, interacts (via C-terminus) with soluble and membrane-bound CD14.</text>
</comment>
<comment type="interaction">
    <interactant intactId="EBI-3927059">
        <id>P18428</id>
    </interactant>
    <interactant intactId="EBI-12275524">
        <id>P23560-2</id>
        <label>BDNF</label>
    </interactant>
    <organismsDiffer>false</organismsDiffer>
    <experiments>3</experiments>
</comment>
<comment type="interaction">
    <interactant intactId="EBI-3927059">
        <id>P18428</id>
    </interactant>
    <interactant intactId="EBI-2211957">
        <id>Q13162</id>
        <label>PRDX4</label>
    </interactant>
    <organismsDiffer>false</organismsDiffer>
    <experiments>4</experiments>
</comment>
<comment type="subcellular location">
    <subcellularLocation>
        <location evidence="7 8 9">Secreted</location>
    </subcellularLocation>
    <subcellularLocation>
        <location evidence="1">Cytoplasmic granule membrane</location>
    </subcellularLocation>
    <text evidence="1">Membrane-associated in polymorphonuclear Leukocytes (PMN) granules.</text>
</comment>
<comment type="tissue specificity">
    <text evidence="7 8">Detected in blood serum (at protein level).</text>
</comment>
<comment type="similarity">
    <text evidence="12">Belongs to the BPI/LBP/Plunc superfamily. BPI/LBP family.</text>
</comment>
<reference key="1">
    <citation type="journal article" date="1990" name="Science">
        <title>Structure and function of lipopolysaccharide binding protein.</title>
        <authorList>
            <person name="Schumann R.R."/>
            <person name="Leong S.R."/>
            <person name="Flaggs G.W."/>
            <person name="Gray P.W."/>
            <person name="Wright S.D."/>
            <person name="Mathison J.C."/>
            <person name="Tobias P.S."/>
            <person name="Ulevitch R.J."/>
        </authorList>
    </citation>
    <scope>NUCLEOTIDE SEQUENCE [MRNA]</scope>
    <scope>PROTEIN SEQUENCE OF 26-40</scope>
    <scope>VARIANT LEU-436</scope>
    <scope>SUBCELLULAR LOCATION</scope>
    <scope>TISSUE SPECIFICITY</scope>
</reference>
<reference key="2">
    <citation type="journal article" date="1994" name="J. Biol. Chem.">
        <title>Bactericidal/permeability-increasing protein and lipopolysaccharide (LPS)-binding protein. LPS binding properties and effects on LPS-mediated cell activation.</title>
        <authorList>
            <person name="Wilde C.G."/>
            <person name="Seilhamer J.J."/>
            <person name="McGrogan M."/>
            <person name="Ashton N."/>
            <person name="Snable J.L."/>
            <person name="Lane J.C."/>
            <person name="Leong S.R."/>
            <person name="Thornton M.B."/>
            <person name="Miller K.L."/>
            <person name="Scott R.W."/>
        </authorList>
    </citation>
    <scope>NUCLEOTIDE SEQUENCE [MRNA]</scope>
    <scope>FUNCTION</scope>
    <scope>SUBCELLULAR LOCATION</scope>
</reference>
<reference key="3">
    <citation type="journal article" date="1997" name="Biochem. Biophys. Res. Commun.">
        <title>The genomic organization of the genes for human lipopolysaccharide binding protein (LBP) and bactericidal permeability increasing protein (BPI) is highly conserved.</title>
        <authorList>
            <person name="Hubacek J.A."/>
            <person name="Buchler C."/>
            <person name="Aslanidis C."/>
            <person name="Schmitz G."/>
        </authorList>
    </citation>
    <scope>NUCLEOTIDE SEQUENCE [GENOMIC DNA]</scope>
    <scope>VARIANT LEU-436</scope>
</reference>
<reference key="4">
    <citation type="journal article" date="1997" name="Genomics">
        <title>Similar organization of the lipopolysaccharide-binding protein (LBP) and phospholipid transfer protein (PLTP) genes suggests a common gene family of lipid-binding proteins.</title>
        <authorList>
            <person name="Kirschning C.J."/>
            <person name="Au-Young J."/>
            <person name="Lamping N."/>
            <person name="Reuter D."/>
            <person name="Pfeil D."/>
            <person name="Seilhamer J.J."/>
            <person name="Schumann R.R."/>
        </authorList>
    </citation>
    <scope>NUCLEOTIDE SEQUENCE [GENOMIC DNA]</scope>
</reference>
<reference key="5">
    <citation type="journal article" date="1998" name="Sheng Wu Hua Xue Yu Sheng Wu Wu Li Jin Zhan">
        <title>Cloning and sequencing of human lipopolysaccharide-binding protein gene.</title>
        <authorList>
            <person name="Long J.Y."/>
            <person name="Liu J.Q."/>
            <person name="Xue Y.N."/>
            <person name="Wang H.X."/>
        </authorList>
    </citation>
    <scope>NUCLEOTIDE SEQUENCE [MRNA]</scope>
    <scope>VARIANT LEU-436</scope>
    <source>
        <tissue>Liver</tissue>
    </source>
</reference>
<reference key="6">
    <citation type="journal article" date="2004" name="Nat. Genet.">
        <title>Complete sequencing and characterization of 21,243 full-length human cDNAs.</title>
        <authorList>
            <person name="Ota T."/>
            <person name="Suzuki Y."/>
            <person name="Nishikawa T."/>
            <person name="Otsuki T."/>
            <person name="Sugiyama T."/>
            <person name="Irie R."/>
            <person name="Wakamatsu A."/>
            <person name="Hayashi K."/>
            <person name="Sato H."/>
            <person name="Nagai K."/>
            <person name="Kimura K."/>
            <person name="Makita H."/>
            <person name="Sekine M."/>
            <person name="Obayashi M."/>
            <person name="Nishi T."/>
            <person name="Shibahara T."/>
            <person name="Tanaka T."/>
            <person name="Ishii S."/>
            <person name="Yamamoto J."/>
            <person name="Saito K."/>
            <person name="Kawai Y."/>
            <person name="Isono Y."/>
            <person name="Nakamura Y."/>
            <person name="Nagahari K."/>
            <person name="Murakami K."/>
            <person name="Yasuda T."/>
            <person name="Iwayanagi T."/>
            <person name="Wagatsuma M."/>
            <person name="Shiratori A."/>
            <person name="Sudo H."/>
            <person name="Hosoiri T."/>
            <person name="Kaku Y."/>
            <person name="Kodaira H."/>
            <person name="Kondo H."/>
            <person name="Sugawara M."/>
            <person name="Takahashi M."/>
            <person name="Kanda K."/>
            <person name="Yokoi T."/>
            <person name="Furuya T."/>
            <person name="Kikkawa E."/>
            <person name="Omura Y."/>
            <person name="Abe K."/>
            <person name="Kamihara K."/>
            <person name="Katsuta N."/>
            <person name="Sato K."/>
            <person name="Tanikawa M."/>
            <person name="Yamazaki M."/>
            <person name="Ninomiya K."/>
            <person name="Ishibashi T."/>
            <person name="Yamashita H."/>
            <person name="Murakawa K."/>
            <person name="Fujimori K."/>
            <person name="Tanai H."/>
            <person name="Kimata M."/>
            <person name="Watanabe M."/>
            <person name="Hiraoka S."/>
            <person name="Chiba Y."/>
            <person name="Ishida S."/>
            <person name="Ono Y."/>
            <person name="Takiguchi S."/>
            <person name="Watanabe S."/>
            <person name="Yosida M."/>
            <person name="Hotuta T."/>
            <person name="Kusano J."/>
            <person name="Kanehori K."/>
            <person name="Takahashi-Fujii A."/>
            <person name="Hara H."/>
            <person name="Tanase T.-O."/>
            <person name="Nomura Y."/>
            <person name="Togiya S."/>
            <person name="Komai F."/>
            <person name="Hara R."/>
            <person name="Takeuchi K."/>
            <person name="Arita M."/>
            <person name="Imose N."/>
            <person name="Musashino K."/>
            <person name="Yuuki H."/>
            <person name="Oshima A."/>
            <person name="Sasaki N."/>
            <person name="Aotsuka S."/>
            <person name="Yoshikawa Y."/>
            <person name="Matsunawa H."/>
            <person name="Ichihara T."/>
            <person name="Shiohata N."/>
            <person name="Sano S."/>
            <person name="Moriya S."/>
            <person name="Momiyama H."/>
            <person name="Satoh N."/>
            <person name="Takami S."/>
            <person name="Terashima Y."/>
            <person name="Suzuki O."/>
            <person name="Nakagawa S."/>
            <person name="Senoh A."/>
            <person name="Mizoguchi H."/>
            <person name="Goto Y."/>
            <person name="Shimizu F."/>
            <person name="Wakebe H."/>
            <person name="Hishigaki H."/>
            <person name="Watanabe T."/>
            <person name="Sugiyama A."/>
            <person name="Takemoto M."/>
            <person name="Kawakami B."/>
            <person name="Yamazaki M."/>
            <person name="Watanabe K."/>
            <person name="Kumagai A."/>
            <person name="Itakura S."/>
            <person name="Fukuzumi Y."/>
            <person name="Fujimori Y."/>
            <person name="Komiyama M."/>
            <person name="Tashiro H."/>
            <person name="Tanigami A."/>
            <person name="Fujiwara T."/>
            <person name="Ono T."/>
            <person name="Yamada K."/>
            <person name="Fujii Y."/>
            <person name="Ozaki K."/>
            <person name="Hirao M."/>
            <person name="Ohmori Y."/>
            <person name="Kawabata A."/>
            <person name="Hikiji T."/>
            <person name="Kobatake N."/>
            <person name="Inagaki H."/>
            <person name="Ikema Y."/>
            <person name="Okamoto S."/>
            <person name="Okitani R."/>
            <person name="Kawakami T."/>
            <person name="Noguchi S."/>
            <person name="Itoh T."/>
            <person name="Shigeta K."/>
            <person name="Senba T."/>
            <person name="Matsumura K."/>
            <person name="Nakajima Y."/>
            <person name="Mizuno T."/>
            <person name="Morinaga M."/>
            <person name="Sasaki M."/>
            <person name="Togashi T."/>
            <person name="Oyama M."/>
            <person name="Hata H."/>
            <person name="Watanabe M."/>
            <person name="Komatsu T."/>
            <person name="Mizushima-Sugano J."/>
            <person name="Satoh T."/>
            <person name="Shirai Y."/>
            <person name="Takahashi Y."/>
            <person name="Nakagawa K."/>
            <person name="Okumura K."/>
            <person name="Nagase T."/>
            <person name="Nomura N."/>
            <person name="Kikuchi H."/>
            <person name="Masuho Y."/>
            <person name="Yamashita R."/>
            <person name="Nakai K."/>
            <person name="Yada T."/>
            <person name="Nakamura Y."/>
            <person name="Ohara O."/>
            <person name="Isogai T."/>
            <person name="Sugano S."/>
        </authorList>
    </citation>
    <scope>NUCLEOTIDE SEQUENCE [LARGE SCALE MRNA]</scope>
    <source>
        <tissue>Liver</tissue>
    </source>
</reference>
<reference key="7">
    <citation type="journal article" date="2001" name="Nature">
        <title>The DNA sequence and comparative analysis of human chromosome 20.</title>
        <authorList>
            <person name="Deloukas P."/>
            <person name="Matthews L.H."/>
            <person name="Ashurst J.L."/>
            <person name="Burton J."/>
            <person name="Gilbert J.G.R."/>
            <person name="Jones M."/>
            <person name="Stavrides G."/>
            <person name="Almeida J.P."/>
            <person name="Babbage A.K."/>
            <person name="Bagguley C.L."/>
            <person name="Bailey J."/>
            <person name="Barlow K.F."/>
            <person name="Bates K.N."/>
            <person name="Beard L.M."/>
            <person name="Beare D.M."/>
            <person name="Beasley O.P."/>
            <person name="Bird C.P."/>
            <person name="Blakey S.E."/>
            <person name="Bridgeman A.M."/>
            <person name="Brown A.J."/>
            <person name="Buck D."/>
            <person name="Burrill W.D."/>
            <person name="Butler A.P."/>
            <person name="Carder C."/>
            <person name="Carter N.P."/>
            <person name="Chapman J.C."/>
            <person name="Clamp M."/>
            <person name="Clark G."/>
            <person name="Clark L.N."/>
            <person name="Clark S.Y."/>
            <person name="Clee C.M."/>
            <person name="Clegg S."/>
            <person name="Cobley V.E."/>
            <person name="Collier R.E."/>
            <person name="Connor R.E."/>
            <person name="Corby N.R."/>
            <person name="Coulson A."/>
            <person name="Coville G.J."/>
            <person name="Deadman R."/>
            <person name="Dhami P.D."/>
            <person name="Dunn M."/>
            <person name="Ellington A.G."/>
            <person name="Frankland J.A."/>
            <person name="Fraser A."/>
            <person name="French L."/>
            <person name="Garner P."/>
            <person name="Grafham D.V."/>
            <person name="Griffiths C."/>
            <person name="Griffiths M.N.D."/>
            <person name="Gwilliam R."/>
            <person name="Hall R.E."/>
            <person name="Hammond S."/>
            <person name="Harley J.L."/>
            <person name="Heath P.D."/>
            <person name="Ho S."/>
            <person name="Holden J.L."/>
            <person name="Howden P.J."/>
            <person name="Huckle E."/>
            <person name="Hunt A.R."/>
            <person name="Hunt S.E."/>
            <person name="Jekosch K."/>
            <person name="Johnson C.M."/>
            <person name="Johnson D."/>
            <person name="Kay M.P."/>
            <person name="Kimberley A.M."/>
            <person name="King A."/>
            <person name="Knights A."/>
            <person name="Laird G.K."/>
            <person name="Lawlor S."/>
            <person name="Lehvaeslaiho M.H."/>
            <person name="Leversha M.A."/>
            <person name="Lloyd C."/>
            <person name="Lloyd D.M."/>
            <person name="Lovell J.D."/>
            <person name="Marsh V.L."/>
            <person name="Martin S.L."/>
            <person name="McConnachie L.J."/>
            <person name="McLay K."/>
            <person name="McMurray A.A."/>
            <person name="Milne S.A."/>
            <person name="Mistry D."/>
            <person name="Moore M.J.F."/>
            <person name="Mullikin J.C."/>
            <person name="Nickerson T."/>
            <person name="Oliver K."/>
            <person name="Parker A."/>
            <person name="Patel R."/>
            <person name="Pearce T.A.V."/>
            <person name="Peck A.I."/>
            <person name="Phillimore B.J.C.T."/>
            <person name="Prathalingam S.R."/>
            <person name="Plumb R.W."/>
            <person name="Ramsay H."/>
            <person name="Rice C.M."/>
            <person name="Ross M.T."/>
            <person name="Scott C.E."/>
            <person name="Sehra H.K."/>
            <person name="Shownkeen R."/>
            <person name="Sims S."/>
            <person name="Skuce C.D."/>
            <person name="Smith M.L."/>
            <person name="Soderlund C."/>
            <person name="Steward C.A."/>
            <person name="Sulston J.E."/>
            <person name="Swann R.M."/>
            <person name="Sycamore N."/>
            <person name="Taylor R."/>
            <person name="Tee L."/>
            <person name="Thomas D.W."/>
            <person name="Thorpe A."/>
            <person name="Tracey A."/>
            <person name="Tromans A.C."/>
            <person name="Vaudin M."/>
            <person name="Wall M."/>
            <person name="Wallis J.M."/>
            <person name="Whitehead S.L."/>
            <person name="Whittaker P."/>
            <person name="Willey D.L."/>
            <person name="Williams L."/>
            <person name="Williams S.A."/>
            <person name="Wilming L."/>
            <person name="Wray P.W."/>
            <person name="Hubbard T."/>
            <person name="Durbin R.M."/>
            <person name="Bentley D.R."/>
            <person name="Beck S."/>
            <person name="Rogers J."/>
        </authorList>
    </citation>
    <scope>NUCLEOTIDE SEQUENCE [LARGE SCALE GENOMIC DNA]</scope>
</reference>
<reference key="8">
    <citation type="submission" date="2005-09" db="EMBL/GenBank/DDBJ databases">
        <authorList>
            <person name="Mural R.J."/>
            <person name="Istrail S."/>
            <person name="Sutton G.G."/>
            <person name="Florea L."/>
            <person name="Halpern A.L."/>
            <person name="Mobarry C.M."/>
            <person name="Lippert R."/>
            <person name="Walenz B."/>
            <person name="Shatkay H."/>
            <person name="Dew I."/>
            <person name="Miller J.R."/>
            <person name="Flanigan M.J."/>
            <person name="Edwards N.J."/>
            <person name="Bolanos R."/>
            <person name="Fasulo D."/>
            <person name="Halldorsson B.V."/>
            <person name="Hannenhalli S."/>
            <person name="Turner R."/>
            <person name="Yooseph S."/>
            <person name="Lu F."/>
            <person name="Nusskern D.R."/>
            <person name="Shue B.C."/>
            <person name="Zheng X.H."/>
            <person name="Zhong F."/>
            <person name="Delcher A.L."/>
            <person name="Huson D.H."/>
            <person name="Kravitz S.A."/>
            <person name="Mouchard L."/>
            <person name="Reinert K."/>
            <person name="Remington K.A."/>
            <person name="Clark A.G."/>
            <person name="Waterman M.S."/>
            <person name="Eichler E.E."/>
            <person name="Adams M.D."/>
            <person name="Hunkapiller M.W."/>
            <person name="Myers E.W."/>
            <person name="Venter J.C."/>
        </authorList>
    </citation>
    <scope>NUCLEOTIDE SEQUENCE [LARGE SCALE GENOMIC DNA]</scope>
</reference>
<reference key="9">
    <citation type="submission" date="1995-05" db="EMBL/GenBank/DDBJ databases">
        <title>Cloning and characterization of the human LBP upstream sequence.</title>
        <authorList>
            <person name="Sutton C.L."/>
            <person name="Smith R.I.F."/>
            <person name="Centola M.B."/>
            <person name="Theofan G."/>
        </authorList>
    </citation>
    <scope>NUCLEOTIDE SEQUENCE [GENOMIC DNA] OF 1-41</scope>
</reference>
<reference key="10">
    <citation type="journal article" date="1990" name="Science">
        <title>CD14, a receptor for complexes of lipopolysaccharide (LPS) and LPS binding protein.</title>
        <authorList>
            <person name="Wright S.D."/>
            <person name="Ramos R.A."/>
            <person name="Tobias P.S."/>
            <person name="Ulevitch R.J."/>
            <person name="Mathison J.C."/>
        </authorList>
    </citation>
    <scope>FUNCTION</scope>
    <scope>INTERACTION WITH CD14 AND LIPOPOLYSACCHARIDE</scope>
</reference>
<reference key="11">
    <citation type="journal article" date="2007" name="Int. J. Med. Microbiol.">
        <title>Structural biology of the LPS recognition.</title>
        <authorList>
            <person name="Jerala R."/>
        </authorList>
    </citation>
    <scope>REVIEW</scope>
</reference>
<reference key="12">
    <citation type="journal article" date="2009" name="J. Proteome Res.">
        <title>Glycoproteomics analysis of human liver tissue by combination of multiple enzyme digestion and hydrazide chemistry.</title>
        <authorList>
            <person name="Chen R."/>
            <person name="Jiang X."/>
            <person name="Sun D."/>
            <person name="Han G."/>
            <person name="Wang F."/>
            <person name="Ye M."/>
            <person name="Wang L."/>
            <person name="Zou H."/>
        </authorList>
    </citation>
    <scope>GLYCOSYLATION [LARGE SCALE ANALYSIS] AT ASN-394</scope>
    <source>
        <tissue>Liver</tissue>
    </source>
</reference>
<reference key="13">
    <citation type="journal article" date="2010" name="Int. Immunol.">
        <title>Lipopolysaccharide-binding protein-mediated Toll-like receptor 4 dimerization enables rapid signal transduction against lipopolysaccharide stimulation on membrane-associated CD14-expressing cells.</title>
        <authorList>
            <person name="Tsukamoto H."/>
            <person name="Fukudome K."/>
            <person name="Takao S."/>
            <person name="Tsuneyoshi N."/>
            <person name="Kimoto M."/>
        </authorList>
    </citation>
    <scope>FUNCTION</scope>
</reference>
<reference key="14">
    <citation type="journal article" date="2013" name="Immunity">
        <title>The crystal structure of lipopolysaccharide binding protein reveals the location of a frequent mutation that impairs innate immunity.</title>
        <authorList>
            <person name="Eckert J.K."/>
            <person name="Kim Y.J."/>
            <person name="Kim J.I."/>
            <person name="Guertler K."/>
            <person name="Oh D.Y."/>
            <person name="Sur S."/>
            <person name="Lundvall L."/>
            <person name="Hamann L."/>
            <person name="van der Ploeg A."/>
            <person name="Pickkers P."/>
            <person name="Giamarellos-Bourboulis E."/>
            <person name="Kubarenko A.V."/>
            <person name="Weber A.N."/>
            <person name="Kabesch M."/>
            <person name="Kumpf O."/>
            <person name="An H.J."/>
            <person name="Lee J.O."/>
            <person name="Schumann R.R."/>
        </authorList>
    </citation>
    <scope>FUNCTION</scope>
    <scope>3D-STRUCTURE MODELING</scope>
    <scope>SUBCELLULAR LOCATION</scope>
    <scope>TISSUE SPECIFICITY</scope>
    <scope>GLYCOSYLATION</scope>
    <scope>VARIANT LEU-333</scope>
    <scope>CHARACTERIZATION OF VARIANT LEU-333</scope>
</reference>
<keyword id="KW-0044">Antibiotic</keyword>
<keyword id="KW-0929">Antimicrobial</keyword>
<keyword id="KW-0903">Direct protein sequencing</keyword>
<keyword id="KW-1015">Disulfide bond</keyword>
<keyword id="KW-0325">Glycoprotein</keyword>
<keyword id="KW-0391">Immunity</keyword>
<keyword id="KW-0399">Innate immunity</keyword>
<keyword id="KW-0445">Lipid transport</keyword>
<keyword id="KW-0472">Membrane</keyword>
<keyword id="KW-1267">Proteomics identification</keyword>
<keyword id="KW-1185">Reference proteome</keyword>
<keyword id="KW-0964">Secreted</keyword>
<keyword id="KW-0732">Signal</keyword>
<keyword id="KW-0813">Transport</keyword>
<protein>
    <recommendedName>
        <fullName>Lipopolysaccharide-binding protein</fullName>
        <shortName>LBP</shortName>
    </recommendedName>
</protein>
<sequence>MGALARALPSILLALLLTSTPEALGANPGLVARITDKGLQYAAQEGLLALQSELLRITLPDFTGDLRIPHVGRGRYEFHSLNIHSCELLHSALRPVPGQGLSLSISDSSIRVQGRWKVRKSFFKLQGSFDVSVKGISISVNLLLGSESSGRPTVTASSCSSDIADVEVDMSGDLGWLLNLFHNQIESKFQKVLESRICEMIQKSVSSDLQPYLQTLPVTTEIDSFADIDYSLVEAPRATAQMLEVMFKGEIFHRNHRSPVTLLAAVMSLPEEHNKMVYFAISDYVFNTASLVYHEEGYLNFSITDDMIPPDSNIRLTTKSFRPFVPRLARLYPNMNLELQGSVPSAPLLNFSPGNLSVDPYMEIDAFVLLPSSSKEPVFRLSVATNVSATLTFNTSKITGFLKPGKVKVELKESKVGLFNAELLEALLNYYILNTFYPKFNDKLAEGFPLPLLKRVQLYDLGLQIHKDFLFLGANVQYMRV</sequence>
<gene>
    <name type="primary">LBP</name>
</gene>
<organism>
    <name type="scientific">Homo sapiens</name>
    <name type="common">Human</name>
    <dbReference type="NCBI Taxonomy" id="9606"/>
    <lineage>
        <taxon>Eukaryota</taxon>
        <taxon>Metazoa</taxon>
        <taxon>Chordata</taxon>
        <taxon>Craniata</taxon>
        <taxon>Vertebrata</taxon>
        <taxon>Euteleostomi</taxon>
        <taxon>Mammalia</taxon>
        <taxon>Eutheria</taxon>
        <taxon>Euarchontoglires</taxon>
        <taxon>Primates</taxon>
        <taxon>Haplorrhini</taxon>
        <taxon>Catarrhini</taxon>
        <taxon>Hominidae</taxon>
        <taxon>Homo</taxon>
    </lineage>
</organism>
<feature type="signal peptide" evidence="7">
    <location>
        <begin position="1"/>
        <end position="25"/>
    </location>
</feature>
<feature type="chain" id="PRO_0000017158" description="Lipopolysaccharide-binding protein">
    <location>
        <begin position="26"/>
        <end position="481"/>
    </location>
</feature>
<feature type="glycosylation site" description="N-linked (GlcNAc...) asparagine" evidence="3">
    <location>
        <position position="300"/>
    </location>
</feature>
<feature type="glycosylation site" description="N-linked (GlcNAc...) asparagine" evidence="3">
    <location>
        <position position="355"/>
    </location>
</feature>
<feature type="glycosylation site" description="N-linked (GlcNAc...) asparagine" evidence="3">
    <location>
        <position position="386"/>
    </location>
</feature>
<feature type="glycosylation site" description="N-linked (GlcNAc...) asparagine" evidence="5">
    <location>
        <position position="394"/>
    </location>
</feature>
<feature type="disulfide bond" evidence="2">
    <location>
        <begin position="159"/>
        <end position="198"/>
    </location>
</feature>
<feature type="sequence variant" id="VAR_028243" description="In dbSNP:rs2232580.">
    <original>P</original>
    <variation>L</variation>
    <location>
        <position position="9"/>
    </location>
</feature>
<feature type="sequence variant" id="VAR_049737" description="In dbSNP:rs2232583.">
    <original>R</original>
    <variation>Q</variation>
    <location>
        <position position="111"/>
    </location>
</feature>
<feature type="sequence variant" id="VAR_028244" description="In dbSNP:rs2232585.">
    <original>L</original>
    <variation>I</variation>
    <location>
        <position position="125"/>
    </location>
</feature>
<feature type="sequence variant" id="VAR_049738" description="In dbSNP:rs36015492.">
    <original>E</original>
    <variation>K</variation>
    <location>
        <position position="147"/>
    </location>
</feature>
<feature type="sequence variant" id="VAR_061293" description="In dbSNP:rs2232586.">
    <original>S</original>
    <variation>C</variation>
    <location>
        <position position="157"/>
    </location>
</feature>
<feature type="sequence variant" id="VAR_028245" description="In dbSNP:rs5744204.">
    <original>V</original>
    <variation>M</variation>
    <location>
        <position position="166"/>
    </location>
</feature>
<feature type="sequence variant" id="VAR_028246" description="In dbSNP:rs2232601.">
    <original>M</original>
    <variation>I</variation>
    <location>
        <position position="242"/>
    </location>
</feature>
<feature type="sequence variant" id="VAR_028247" description="In dbSNP:rs2232607.">
    <original>D</original>
    <variation>G</variation>
    <location>
        <position position="283"/>
    </location>
</feature>
<feature type="sequence variant" id="VAR_028248" description="In dbSNP:rs2232608.">
    <original>H</original>
    <variation>R</variation>
    <location>
        <position position="294"/>
    </location>
</feature>
<feature type="sequence variant" id="VAR_028249" description="Abolishes lipopolysaccharide binding and causes increased proteolytic degradation of the protein; dbSNP:rs2232613." evidence="8">
    <original>P</original>
    <variation>L</variation>
    <location>
        <position position="333"/>
    </location>
</feature>
<feature type="sequence variant" id="VAR_028250" description="In dbSNP:rs5744212.">
    <original>L</original>
    <variation>F</variation>
    <location>
        <position position="339"/>
    </location>
</feature>
<feature type="sequence variant" id="VAR_049739" description="In dbSNP:rs2232615.">
    <original>I</original>
    <variation>T</variation>
    <location>
        <position position="364"/>
    </location>
</feature>
<feature type="sequence variant" id="VAR_028251" description="In dbSNP:rs2232618." evidence="7 10 11">
    <original>F</original>
    <variation>L</variation>
    <location>
        <position position="436"/>
    </location>
</feature>
<feature type="sequence variant" id="VAR_028252" description="In dbSNP:rs2232619.">
    <original>A</original>
    <variation>T</variation>
    <location>
        <position position="445"/>
    </location>
</feature>
<feature type="sequence conflict" description="In Ref. 2." evidence="12" ref="2">
    <original>R</original>
    <variation>H</variation>
    <location>
        <position position="6"/>
    </location>
</feature>
<feature type="sequence conflict" description="In Ref. 2." evidence="12" ref="2">
    <original>E</original>
    <variation>C</variation>
    <location>
        <position position="22"/>
    </location>
</feature>
<feature type="sequence conflict" description="In Ref. 4; AAC39547." evidence="12" ref="4">
    <original>N</original>
    <variation>K</variation>
    <location>
        <position position="82"/>
    </location>
</feature>
<feature type="sequence conflict" description="In Ref. 4; AAC39547." evidence="12" ref="4">
    <original>S</original>
    <variation>F</variation>
    <location>
        <position position="128"/>
    </location>
</feature>
<feature type="sequence conflict" description="In Ref. 1; AAA59493." evidence="12" ref="1">
    <original>VTAS</original>
    <variation>GYCL</variation>
    <location>
        <begin position="154"/>
        <end position="157"/>
    </location>
</feature>
<feature type="sequence conflict" description="In Ref. 1; AAA59493." evidence="12" ref="1">
    <original>L</original>
    <variation>S</variation>
    <location>
        <position position="174"/>
    </location>
</feature>
<feature type="sequence conflict" description="In Ref. 4; AAC39547." evidence="12" ref="4">
    <original>R</original>
    <variation>S</variation>
    <location>
        <position position="257"/>
    </location>
</feature>
<feature type="sequence conflict" description="In Ref. 1; AAA59493." evidence="12" ref="1">
    <original>VMSLP</original>
    <variation>A</variation>
    <location>
        <begin position="266"/>
        <end position="270"/>
    </location>
</feature>
<feature type="sequence conflict" description="In Ref. 4; AAC39547." evidence="12" ref="4">
    <original>L</original>
    <variation>H</variation>
    <location>
        <position position="369"/>
    </location>
</feature>
<proteinExistence type="evidence at protein level"/>
<dbReference type="EMBL" id="M35533">
    <property type="protein sequence ID" value="AAA59493.1"/>
    <property type="molecule type" value="mRNA"/>
</dbReference>
<dbReference type="EMBL" id="X98657">
    <property type="protein sequence ID" value="CAA67226.1"/>
    <property type="molecule type" value="Genomic_DNA"/>
</dbReference>
<dbReference type="EMBL" id="X98658">
    <property type="protein sequence ID" value="CAA67226.1"/>
    <property type="status" value="JOINED"/>
    <property type="molecule type" value="Genomic_DNA"/>
</dbReference>
<dbReference type="EMBL" id="X98659">
    <property type="protein sequence ID" value="CAA67226.1"/>
    <property type="status" value="JOINED"/>
    <property type="molecule type" value="Genomic_DNA"/>
</dbReference>
<dbReference type="EMBL" id="X98660">
    <property type="protein sequence ID" value="CAA67226.1"/>
    <property type="status" value="JOINED"/>
    <property type="molecule type" value="Genomic_DNA"/>
</dbReference>
<dbReference type="EMBL" id="X98661">
    <property type="protein sequence ID" value="CAA67226.1"/>
    <property type="status" value="JOINED"/>
    <property type="molecule type" value="Genomic_DNA"/>
</dbReference>
<dbReference type="EMBL" id="X98662">
    <property type="protein sequence ID" value="CAA67226.1"/>
    <property type="status" value="JOINED"/>
    <property type="molecule type" value="Genomic_DNA"/>
</dbReference>
<dbReference type="EMBL" id="X98663">
    <property type="protein sequence ID" value="CAA67226.1"/>
    <property type="status" value="JOINED"/>
    <property type="molecule type" value="Genomic_DNA"/>
</dbReference>
<dbReference type="EMBL" id="X98664">
    <property type="protein sequence ID" value="CAA67226.1"/>
    <property type="status" value="JOINED"/>
    <property type="molecule type" value="Genomic_DNA"/>
</dbReference>
<dbReference type="EMBL" id="X98665">
    <property type="protein sequence ID" value="CAA67226.1"/>
    <property type="status" value="JOINED"/>
    <property type="molecule type" value="Genomic_DNA"/>
</dbReference>
<dbReference type="EMBL" id="X98666">
    <property type="protein sequence ID" value="CAA67226.1"/>
    <property type="status" value="JOINED"/>
    <property type="molecule type" value="Genomic_DNA"/>
</dbReference>
<dbReference type="EMBL" id="X98667">
    <property type="protein sequence ID" value="CAA67226.1"/>
    <property type="status" value="JOINED"/>
    <property type="molecule type" value="Genomic_DNA"/>
</dbReference>
<dbReference type="EMBL" id="X98668">
    <property type="protein sequence ID" value="CAA67226.1"/>
    <property type="status" value="JOINED"/>
    <property type="molecule type" value="Genomic_DNA"/>
</dbReference>
<dbReference type="EMBL" id="AF013512">
    <property type="protein sequence ID" value="AAC39547.1"/>
    <property type="molecule type" value="Genomic_DNA"/>
</dbReference>
<dbReference type="EMBL" id="AF013500">
    <property type="protein sequence ID" value="AAC39547.1"/>
    <property type="status" value="JOINED"/>
    <property type="molecule type" value="Genomic_DNA"/>
</dbReference>
<dbReference type="EMBL" id="AF013501">
    <property type="protein sequence ID" value="AAC39547.1"/>
    <property type="status" value="JOINED"/>
    <property type="molecule type" value="Genomic_DNA"/>
</dbReference>
<dbReference type="EMBL" id="AF013502">
    <property type="protein sequence ID" value="AAC39547.1"/>
    <property type="status" value="JOINED"/>
    <property type="molecule type" value="Genomic_DNA"/>
</dbReference>
<dbReference type="EMBL" id="AF013503">
    <property type="protein sequence ID" value="AAC39547.1"/>
    <property type="status" value="JOINED"/>
    <property type="molecule type" value="Genomic_DNA"/>
</dbReference>
<dbReference type="EMBL" id="AF013504">
    <property type="protein sequence ID" value="AAC39547.1"/>
    <property type="status" value="JOINED"/>
    <property type="molecule type" value="Genomic_DNA"/>
</dbReference>
<dbReference type="EMBL" id="AF013505">
    <property type="protein sequence ID" value="AAC39547.1"/>
    <property type="status" value="JOINED"/>
    <property type="molecule type" value="Genomic_DNA"/>
</dbReference>
<dbReference type="EMBL" id="AF013506">
    <property type="protein sequence ID" value="AAC39547.1"/>
    <property type="status" value="JOINED"/>
    <property type="molecule type" value="Genomic_DNA"/>
</dbReference>
<dbReference type="EMBL" id="AF013507">
    <property type="protein sequence ID" value="AAC39547.1"/>
    <property type="status" value="JOINED"/>
    <property type="molecule type" value="Genomic_DNA"/>
</dbReference>
<dbReference type="EMBL" id="AF013508">
    <property type="protein sequence ID" value="AAC39547.1"/>
    <property type="status" value="JOINED"/>
    <property type="molecule type" value="Genomic_DNA"/>
</dbReference>
<dbReference type="EMBL" id="AF013509">
    <property type="protein sequence ID" value="AAC39547.1"/>
    <property type="status" value="JOINED"/>
    <property type="molecule type" value="Genomic_DNA"/>
</dbReference>
<dbReference type="EMBL" id="AF013510">
    <property type="protein sequence ID" value="AAC39547.1"/>
    <property type="status" value="JOINED"/>
    <property type="molecule type" value="Genomic_DNA"/>
</dbReference>
<dbReference type="EMBL" id="AF013511">
    <property type="protein sequence ID" value="AAC39547.1"/>
    <property type="status" value="JOINED"/>
    <property type="molecule type" value="Genomic_DNA"/>
</dbReference>
<dbReference type="EMBL" id="AF105067">
    <property type="protein sequence ID" value="AAD21962.1"/>
    <property type="molecule type" value="mRNA"/>
</dbReference>
<dbReference type="EMBL" id="AK313625">
    <property type="protein sequence ID" value="BAG36385.1"/>
    <property type="molecule type" value="mRNA"/>
</dbReference>
<dbReference type="EMBL" id="AL080249">
    <property type="protein sequence ID" value="CAC10462.1"/>
    <property type="molecule type" value="Genomic_DNA"/>
</dbReference>
<dbReference type="EMBL" id="CH471077">
    <property type="protein sequence ID" value="EAW76034.1"/>
    <property type="molecule type" value="Genomic_DNA"/>
</dbReference>
<dbReference type="EMBL" id="L42172">
    <property type="protein sequence ID" value="AAA66446.1"/>
    <property type="molecule type" value="Genomic_DNA"/>
</dbReference>
<dbReference type="CCDS" id="CCDS13304.1"/>
<dbReference type="PIR" id="A35843">
    <property type="entry name" value="A35843"/>
</dbReference>
<dbReference type="PIR" id="A54136">
    <property type="entry name" value="A54136"/>
</dbReference>
<dbReference type="RefSeq" id="NP_004130.2">
    <property type="nucleotide sequence ID" value="NM_004139.4"/>
</dbReference>
<dbReference type="SMR" id="P18428"/>
<dbReference type="BioGRID" id="110121">
    <property type="interactions" value="18"/>
</dbReference>
<dbReference type="DIP" id="DIP-90N"/>
<dbReference type="FunCoup" id="P18428">
    <property type="interactions" value="190"/>
</dbReference>
<dbReference type="IntAct" id="P18428">
    <property type="interactions" value="15"/>
</dbReference>
<dbReference type="STRING" id="9606.ENSP00000217407"/>
<dbReference type="TCDB" id="1.C.40.1.2">
    <property type="family name" value="the bactericidal permeability increasing protein (bpip) family"/>
</dbReference>
<dbReference type="GlyConnect" id="1985">
    <property type="glycosylation" value="6 N-Linked glycans (1 site)"/>
</dbReference>
<dbReference type="GlyCosmos" id="P18428">
    <property type="glycosylation" value="4 sites, 6 glycans"/>
</dbReference>
<dbReference type="GlyGen" id="P18428">
    <property type="glycosylation" value="4 sites, 7 N-linked glycans (1 site)"/>
</dbReference>
<dbReference type="iPTMnet" id="P18428"/>
<dbReference type="PhosphoSitePlus" id="P18428"/>
<dbReference type="BioMuta" id="LBP"/>
<dbReference type="DMDM" id="116242615"/>
<dbReference type="CPTAC" id="non-CPTAC-1140"/>
<dbReference type="MassIVE" id="P18428"/>
<dbReference type="PaxDb" id="9606-ENSP00000217407"/>
<dbReference type="PeptideAtlas" id="P18428"/>
<dbReference type="ProteomicsDB" id="53558"/>
<dbReference type="TopDownProteomics" id="P18428"/>
<dbReference type="Antibodypedia" id="777">
    <property type="antibodies" value="404 antibodies from 37 providers"/>
</dbReference>
<dbReference type="DNASU" id="3929"/>
<dbReference type="Ensembl" id="ENST00000217407.3">
    <property type="protein sequence ID" value="ENSP00000217407.2"/>
    <property type="gene ID" value="ENSG00000129988.6"/>
</dbReference>
<dbReference type="GeneID" id="3929"/>
<dbReference type="KEGG" id="hsa:3929"/>
<dbReference type="MANE-Select" id="ENST00000217407.3">
    <property type="protein sequence ID" value="ENSP00000217407.2"/>
    <property type="RefSeq nucleotide sequence ID" value="NM_004139.5"/>
    <property type="RefSeq protein sequence ID" value="NP_004130.2"/>
</dbReference>
<dbReference type="UCSC" id="uc002xic.3">
    <property type="organism name" value="human"/>
</dbReference>
<dbReference type="AGR" id="HGNC:6517"/>
<dbReference type="CTD" id="3929"/>
<dbReference type="DisGeNET" id="3929"/>
<dbReference type="GeneCards" id="LBP"/>
<dbReference type="HGNC" id="HGNC:6517">
    <property type="gene designation" value="LBP"/>
</dbReference>
<dbReference type="HPA" id="ENSG00000129988">
    <property type="expression patterns" value="Tissue enriched (liver)"/>
</dbReference>
<dbReference type="MIM" id="151990">
    <property type="type" value="gene"/>
</dbReference>
<dbReference type="neXtProt" id="NX_P18428"/>
<dbReference type="OpenTargets" id="ENSG00000129988"/>
<dbReference type="PharmGKB" id="PA30303"/>
<dbReference type="VEuPathDB" id="HostDB:ENSG00000129988"/>
<dbReference type="eggNOG" id="KOG4160">
    <property type="taxonomic scope" value="Eukaryota"/>
</dbReference>
<dbReference type="GeneTree" id="ENSGT01130000278326"/>
<dbReference type="HOGENOM" id="CLU_028970_3_2_1"/>
<dbReference type="InParanoid" id="P18428"/>
<dbReference type="OMA" id="DPYMEID"/>
<dbReference type="OrthoDB" id="10255543at2759"/>
<dbReference type="PAN-GO" id="P18428">
    <property type="GO annotations" value="9 GO annotations based on evolutionary models"/>
</dbReference>
<dbReference type="PhylomeDB" id="P18428"/>
<dbReference type="TreeFam" id="TF315617"/>
<dbReference type="PathwayCommons" id="P18428"/>
<dbReference type="Reactome" id="R-HSA-166016">
    <property type="pathway name" value="Toll Like Receptor 4 (TLR4) Cascade"/>
</dbReference>
<dbReference type="Reactome" id="R-HSA-166020">
    <property type="pathway name" value="Transfer of LPS from LBP carrier to CD14"/>
</dbReference>
<dbReference type="Reactome" id="R-HSA-5686938">
    <property type="pathway name" value="Regulation of TLR by endogenous ligand"/>
</dbReference>
<dbReference type="Reactome" id="R-HSA-6785807">
    <property type="pathway name" value="Interleukin-4 and Interleukin-13 signaling"/>
</dbReference>
<dbReference type="SignaLink" id="P18428"/>
<dbReference type="BioGRID-ORCS" id="3929">
    <property type="hits" value="14 hits in 1159 CRISPR screens"/>
</dbReference>
<dbReference type="ChiTaRS" id="LBP">
    <property type="organism name" value="human"/>
</dbReference>
<dbReference type="GeneWiki" id="Lipopolysaccharide-binding_protein"/>
<dbReference type="GenomeRNAi" id="3929"/>
<dbReference type="Pharos" id="P18428">
    <property type="development level" value="Tbio"/>
</dbReference>
<dbReference type="PRO" id="PR:P18428"/>
<dbReference type="Proteomes" id="UP000005640">
    <property type="component" value="Chromosome 20"/>
</dbReference>
<dbReference type="RNAct" id="P18428">
    <property type="molecule type" value="protein"/>
</dbReference>
<dbReference type="Bgee" id="ENSG00000129988">
    <property type="expression patterns" value="Expressed in right lobe of liver and 107 other cell types or tissues"/>
</dbReference>
<dbReference type="GO" id="GO:0009986">
    <property type="term" value="C:cell surface"/>
    <property type="evidence" value="ECO:0000314"/>
    <property type="project" value="BHF-UCL"/>
</dbReference>
<dbReference type="GO" id="GO:0070062">
    <property type="term" value="C:extracellular exosome"/>
    <property type="evidence" value="ECO:0007005"/>
    <property type="project" value="UniProtKB"/>
</dbReference>
<dbReference type="GO" id="GO:0005576">
    <property type="term" value="C:extracellular region"/>
    <property type="evidence" value="ECO:0000304"/>
    <property type="project" value="Reactome"/>
</dbReference>
<dbReference type="GO" id="GO:0005615">
    <property type="term" value="C:extracellular space"/>
    <property type="evidence" value="ECO:0000314"/>
    <property type="project" value="UniProtKB"/>
</dbReference>
<dbReference type="GO" id="GO:0016020">
    <property type="term" value="C:membrane"/>
    <property type="evidence" value="ECO:0007669"/>
    <property type="project" value="UniProtKB-KW"/>
</dbReference>
<dbReference type="GO" id="GO:0015026">
    <property type="term" value="F:coreceptor activity"/>
    <property type="evidence" value="ECO:0000353"/>
    <property type="project" value="AgBase"/>
</dbReference>
<dbReference type="GO" id="GO:0071723">
    <property type="term" value="F:lipopeptide binding"/>
    <property type="evidence" value="ECO:0000314"/>
    <property type="project" value="AgBase"/>
</dbReference>
<dbReference type="GO" id="GO:0001530">
    <property type="term" value="F:lipopolysaccharide binding"/>
    <property type="evidence" value="ECO:0000314"/>
    <property type="project" value="MGI"/>
</dbReference>
<dbReference type="GO" id="GO:0070891">
    <property type="term" value="F:lipoteichoic acid binding"/>
    <property type="evidence" value="ECO:0000314"/>
    <property type="project" value="MGI"/>
</dbReference>
<dbReference type="GO" id="GO:0005102">
    <property type="term" value="F:signaling receptor binding"/>
    <property type="evidence" value="ECO:0000250"/>
    <property type="project" value="BHF-UCL"/>
</dbReference>
<dbReference type="GO" id="GO:0006953">
    <property type="term" value="P:acute-phase response"/>
    <property type="evidence" value="ECO:0000270"/>
    <property type="project" value="BHF-UCL"/>
</dbReference>
<dbReference type="GO" id="GO:0002752">
    <property type="term" value="P:cell surface pattern recognition receptor signaling pathway"/>
    <property type="evidence" value="ECO:0000314"/>
    <property type="project" value="AgBase"/>
</dbReference>
<dbReference type="GO" id="GO:0006968">
    <property type="term" value="P:cellular defense response"/>
    <property type="evidence" value="ECO:0000250"/>
    <property type="project" value="BHF-UCL"/>
</dbReference>
<dbReference type="GO" id="GO:0071222">
    <property type="term" value="P:cellular response to lipopolysaccharide"/>
    <property type="evidence" value="ECO:0000314"/>
    <property type="project" value="MGI"/>
</dbReference>
<dbReference type="GO" id="GO:0071223">
    <property type="term" value="P:cellular response to lipoteichoic acid"/>
    <property type="evidence" value="ECO:0000314"/>
    <property type="project" value="MGI"/>
</dbReference>
<dbReference type="GO" id="GO:0050829">
    <property type="term" value="P:defense response to Gram-negative bacterium"/>
    <property type="evidence" value="ECO:0000314"/>
    <property type="project" value="BHF-UCL"/>
</dbReference>
<dbReference type="GO" id="GO:0050830">
    <property type="term" value="P:defense response to Gram-positive bacterium"/>
    <property type="evidence" value="ECO:0000314"/>
    <property type="project" value="BHF-UCL"/>
</dbReference>
<dbReference type="GO" id="GO:0032490">
    <property type="term" value="P:detection of molecule of bacterial origin"/>
    <property type="evidence" value="ECO:0000314"/>
    <property type="project" value="BHF-UCL"/>
</dbReference>
<dbReference type="GO" id="GO:0045087">
    <property type="term" value="P:innate immune response"/>
    <property type="evidence" value="ECO:0000250"/>
    <property type="project" value="BHF-UCL"/>
</dbReference>
<dbReference type="GO" id="GO:0002232">
    <property type="term" value="P:leukocyte chemotaxis involved in inflammatory response"/>
    <property type="evidence" value="ECO:0007669"/>
    <property type="project" value="Ensembl"/>
</dbReference>
<dbReference type="GO" id="GO:0015920">
    <property type="term" value="P:lipopolysaccharide transport"/>
    <property type="evidence" value="ECO:0000314"/>
    <property type="project" value="BHF-UCL"/>
</dbReference>
<dbReference type="GO" id="GO:0031663">
    <property type="term" value="P:lipopolysaccharide-mediated signaling pathway"/>
    <property type="evidence" value="ECO:0000314"/>
    <property type="project" value="BHF-UCL"/>
</dbReference>
<dbReference type="GO" id="GO:0002281">
    <property type="term" value="P:macrophage activation involved in immune response"/>
    <property type="evidence" value="ECO:0000315"/>
    <property type="project" value="UniProtKB"/>
</dbReference>
<dbReference type="GO" id="GO:0032720">
    <property type="term" value="P:negative regulation of tumor necrosis factor production"/>
    <property type="evidence" value="ECO:0000314"/>
    <property type="project" value="BHF-UCL"/>
</dbReference>
<dbReference type="GO" id="GO:0030593">
    <property type="term" value="P:neutrophil chemotaxis"/>
    <property type="evidence" value="ECO:0007669"/>
    <property type="project" value="Ensembl"/>
</dbReference>
<dbReference type="GO" id="GO:0008228">
    <property type="term" value="P:opsonization"/>
    <property type="evidence" value="ECO:0000250"/>
    <property type="project" value="BHF-UCL"/>
</dbReference>
<dbReference type="GO" id="GO:0032722">
    <property type="term" value="P:positive regulation of chemokine production"/>
    <property type="evidence" value="ECO:0007669"/>
    <property type="project" value="Ensembl"/>
</dbReference>
<dbReference type="GO" id="GO:0032755">
    <property type="term" value="P:positive regulation of interleukin-6 production"/>
    <property type="evidence" value="ECO:0000314"/>
    <property type="project" value="BHF-UCL"/>
</dbReference>
<dbReference type="GO" id="GO:0032757">
    <property type="term" value="P:positive regulation of interleukin-8 production"/>
    <property type="evidence" value="ECO:0000314"/>
    <property type="project" value="BHF-UCL"/>
</dbReference>
<dbReference type="GO" id="GO:0043032">
    <property type="term" value="P:positive regulation of macrophage activation"/>
    <property type="evidence" value="ECO:0000314"/>
    <property type="project" value="BHF-UCL"/>
</dbReference>
<dbReference type="GO" id="GO:0090023">
    <property type="term" value="P:positive regulation of neutrophil chemotaxis"/>
    <property type="evidence" value="ECO:0007669"/>
    <property type="project" value="Ensembl"/>
</dbReference>
<dbReference type="GO" id="GO:0060265">
    <property type="term" value="P:positive regulation of respiratory burst involved in inflammatory response"/>
    <property type="evidence" value="ECO:0000250"/>
    <property type="project" value="BHF-UCL"/>
</dbReference>
<dbReference type="GO" id="GO:0034145">
    <property type="term" value="P:positive regulation of toll-like receptor 4 signaling pathway"/>
    <property type="evidence" value="ECO:0000314"/>
    <property type="project" value="BHF-UCL"/>
</dbReference>
<dbReference type="GO" id="GO:0032760">
    <property type="term" value="P:positive regulation of tumor necrosis factor production"/>
    <property type="evidence" value="ECO:0000314"/>
    <property type="project" value="MGI"/>
</dbReference>
<dbReference type="GO" id="GO:0032496">
    <property type="term" value="P:response to lipopolysaccharide"/>
    <property type="evidence" value="ECO:0000314"/>
    <property type="project" value="BHF-UCL"/>
</dbReference>
<dbReference type="CDD" id="cd00025">
    <property type="entry name" value="BPI1"/>
    <property type="match status" value="1"/>
</dbReference>
<dbReference type="CDD" id="cd00026">
    <property type="entry name" value="BPI2"/>
    <property type="match status" value="1"/>
</dbReference>
<dbReference type="FunFam" id="3.15.20.10:FF:000001">
    <property type="entry name" value="Phospholipid transfer protein"/>
    <property type="match status" value="1"/>
</dbReference>
<dbReference type="FunFam" id="3.15.10.10:FF:000001">
    <property type="entry name" value="phospholipid transfer protein-like"/>
    <property type="match status" value="1"/>
</dbReference>
<dbReference type="Gene3D" id="3.15.10.10">
    <property type="entry name" value="Bactericidal permeability-increasing protein, domain 1"/>
    <property type="match status" value="1"/>
</dbReference>
<dbReference type="Gene3D" id="3.15.20.10">
    <property type="entry name" value="Bactericidal permeability-increasing protein, domain 2"/>
    <property type="match status" value="1"/>
</dbReference>
<dbReference type="InterPro" id="IPR017943">
    <property type="entry name" value="Bactericidal_perm-incr_a/b_dom"/>
</dbReference>
<dbReference type="InterPro" id="IPR030675">
    <property type="entry name" value="BPI/LBP"/>
</dbReference>
<dbReference type="InterPro" id="IPR032942">
    <property type="entry name" value="BPI/LBP/Plunc"/>
</dbReference>
<dbReference type="InterPro" id="IPR001124">
    <property type="entry name" value="Lipid-bd_serum_glycop_C"/>
</dbReference>
<dbReference type="InterPro" id="IPR017954">
    <property type="entry name" value="Lipid-bd_serum_glycop_CS"/>
</dbReference>
<dbReference type="InterPro" id="IPR017942">
    <property type="entry name" value="Lipid-bd_serum_glycop_N"/>
</dbReference>
<dbReference type="PANTHER" id="PTHR10504">
    <property type="entry name" value="BACTERICIDAL PERMEABILITY-INCREASING BPI PROTEIN-RELATED"/>
    <property type="match status" value="1"/>
</dbReference>
<dbReference type="PANTHER" id="PTHR10504:SF66">
    <property type="entry name" value="LIPOPOLYSACCHARIDE-BINDING PROTEIN"/>
    <property type="match status" value="1"/>
</dbReference>
<dbReference type="Pfam" id="PF01273">
    <property type="entry name" value="LBP_BPI_CETP"/>
    <property type="match status" value="1"/>
</dbReference>
<dbReference type="Pfam" id="PF02886">
    <property type="entry name" value="LBP_BPI_CETP_C"/>
    <property type="match status" value="1"/>
</dbReference>
<dbReference type="PIRSF" id="PIRSF002417">
    <property type="entry name" value="Lipid_binding_protein"/>
    <property type="match status" value="1"/>
</dbReference>
<dbReference type="SMART" id="SM00328">
    <property type="entry name" value="BPI1"/>
    <property type="match status" value="1"/>
</dbReference>
<dbReference type="SMART" id="SM00329">
    <property type="entry name" value="BPI2"/>
    <property type="match status" value="1"/>
</dbReference>
<dbReference type="SUPFAM" id="SSF55394">
    <property type="entry name" value="Bactericidal permeability-increasing protein, BPI"/>
    <property type="match status" value="2"/>
</dbReference>
<dbReference type="PROSITE" id="PS00400">
    <property type="entry name" value="LBP_BPI_CETP"/>
    <property type="match status" value="1"/>
</dbReference>
<name>LBP_HUMAN</name>